<feature type="signal peptide" evidence="2">
    <location>
        <begin position="1"/>
        <end position="23"/>
    </location>
</feature>
<feature type="chain" id="PRO_5002789827" description="Interferon gamma">
    <location>
        <begin position="24"/>
        <end position="198"/>
    </location>
</feature>
<feature type="region of interest" description="Disordered" evidence="4">
    <location>
        <begin position="173"/>
        <end position="198"/>
    </location>
</feature>
<feature type="compositionally biased region" description="Basic residues" evidence="4">
    <location>
        <begin position="178"/>
        <end position="198"/>
    </location>
</feature>
<feature type="glycosylation site" description="N-linked (GlcNAc...) asparagine" evidence="3">
    <location>
        <position position="31"/>
    </location>
</feature>
<feature type="glycosylation site" description="N-linked (GlcNAc...) asparagine" evidence="3">
    <location>
        <position position="42"/>
    </location>
</feature>
<feature type="glycosylation site" description="N-linked (GlcNAc...) asparagine" evidence="3">
    <location>
        <position position="174"/>
    </location>
</feature>
<feature type="sequence conflict" description="In Ref. 1; BAG50576." evidence="8" ref="1">
    <original>GS</original>
    <variation>VA</variation>
    <location>
        <begin position="98"/>
        <end position="99"/>
    </location>
</feature>
<feature type="helix" evidence="11">
    <location>
        <begin position="28"/>
        <end position="40"/>
    </location>
</feature>
<feature type="helix" evidence="11">
    <location>
        <begin position="45"/>
        <end position="48"/>
    </location>
</feature>
<feature type="strand" evidence="11">
    <location>
        <begin position="60"/>
        <end position="62"/>
    </location>
</feature>
<feature type="helix" evidence="11">
    <location>
        <begin position="64"/>
        <end position="87"/>
    </location>
</feature>
<feature type="helix" evidence="11">
    <location>
        <begin position="112"/>
        <end position="130"/>
    </location>
</feature>
<feature type="helix" evidence="11">
    <location>
        <begin position="132"/>
        <end position="145"/>
    </location>
</feature>
<feature type="helix" evidence="11">
    <location>
        <begin position="152"/>
        <end position="160"/>
    </location>
</feature>
<feature type="helix" evidence="11">
    <location>
        <begin position="162"/>
        <end position="172"/>
    </location>
</feature>
<feature type="strand" evidence="11">
    <location>
        <begin position="175"/>
        <end position="177"/>
    </location>
</feature>
<feature type="helix" evidence="11">
    <location>
        <begin position="178"/>
        <end position="184"/>
    </location>
</feature>
<sequence length="198" mass="22822">MMVSTARAVVCLSLCLCVCQVRGSHIPARMNKTIQNLLQHYNISNKDRFNGKPVFPKEPLSGRMETKMLFMGGVLETYEKLIGQMLEQLPNTTPPTAGSREGLNSAAPEVSVRTDLNYILKKVQELRTNRFKEQSKLLQGLHDLGDIKMNNFIIQSKALWELQWMYEEASSLSNNTKMQRRRRRRRRQARKVKTPTRA</sequence>
<protein>
    <recommendedName>
        <fullName evidence="7">Interferon gamma</fullName>
    </recommendedName>
</protein>
<comment type="function">
    <text evidence="1 5">Cytokine which binds to interferon gamma receptor 1 (ifngr1) (PubMed:29742458). Also binds with lower affinity to interferon gamma receptor 1-like (ifngr1l) (PubMed:29742458). Has activating effects on macrophages and neutrophils (By similarity).</text>
</comment>
<comment type="subunit">
    <text evidence="5">Homodimer.</text>
</comment>
<comment type="subcellular location">
    <subcellularLocation>
        <location evidence="9">Secreted</location>
    </subcellularLocation>
</comment>
<comment type="induction">
    <text evidence="6">Strongly up-regulated in response to viral hemorrhagic septicaemia virus infection.</text>
</comment>
<comment type="similarity">
    <text evidence="8">Belongs to the type II (or gamma) interferon family.</text>
</comment>
<evidence type="ECO:0000250" key="1">
    <source>
        <dbReference type="UniProtKB" id="B5B3U4"/>
    </source>
</evidence>
<evidence type="ECO:0000255" key="2"/>
<evidence type="ECO:0000255" key="3">
    <source>
        <dbReference type="PROSITE-ProRule" id="PRU00498"/>
    </source>
</evidence>
<evidence type="ECO:0000256" key="4">
    <source>
        <dbReference type="SAM" id="MobiDB-lite"/>
    </source>
</evidence>
<evidence type="ECO:0000269" key="5">
    <source>
    </source>
</evidence>
<evidence type="ECO:0000269" key="6">
    <source ref="1"/>
</evidence>
<evidence type="ECO:0000303" key="7">
    <source ref="1"/>
</evidence>
<evidence type="ECO:0000305" key="8"/>
<evidence type="ECO:0000305" key="9">
    <source>
    </source>
</evidence>
<evidence type="ECO:0000312" key="10">
    <source>
        <dbReference type="EMBL" id="BAG50577.1"/>
    </source>
</evidence>
<evidence type="ECO:0007829" key="11">
    <source>
        <dbReference type="PDB" id="6F1E"/>
    </source>
</evidence>
<organism evidence="10">
    <name type="scientific">Paralichthys olivaceus</name>
    <name type="common">Bastard halibut</name>
    <name type="synonym">Hippoglossus olivaceus</name>
    <dbReference type="NCBI Taxonomy" id="8255"/>
    <lineage>
        <taxon>Eukaryota</taxon>
        <taxon>Metazoa</taxon>
        <taxon>Chordata</taxon>
        <taxon>Craniata</taxon>
        <taxon>Vertebrata</taxon>
        <taxon>Euteleostomi</taxon>
        <taxon>Actinopterygii</taxon>
        <taxon>Neopterygii</taxon>
        <taxon>Teleostei</taxon>
        <taxon>Neoteleostei</taxon>
        <taxon>Acanthomorphata</taxon>
        <taxon>Carangaria</taxon>
        <taxon>Pleuronectiformes</taxon>
        <taxon>Pleuronectoidei</taxon>
        <taxon>Paralichthyidae</taxon>
        <taxon>Paralichthys</taxon>
    </lineage>
</organism>
<reference evidence="10" key="1">
    <citation type="journal article" date="2009" name="Fish. Sci.">
        <title>Molecular cloning and expression analysis of interferon gamma gene in Japanese flounder Paralichthys olivaceus.</title>
        <authorList>
            <person name="Matsuyama T."/>
            <person name="Fujiwara A."/>
            <person name="Sakai T."/>
            <person name="Nakayasu C."/>
        </authorList>
    </citation>
    <scope>NUCLEOTIDE SEQUENCE [MRNA]</scope>
    <scope>INDUCTION</scope>
</reference>
<reference evidence="8" key="2">
    <citation type="journal article" date="2018" name="Fish Shellfish Immunol.">
        <title>Interferons type II and their receptors R1 and R2 in fish species: Evolution, structure, and function.</title>
        <authorList>
            <person name="Zahradnik J."/>
            <person name="Kolarova L."/>
            <person name="Parizkova H."/>
            <person name="Kolenko P."/>
            <person name="Schneider B."/>
        </authorList>
    </citation>
    <scope>X-RAY CRYSTALLOGRAPHY (2.3 ANGSTROMS) OF 24-198</scope>
    <scope>FUNCTION</scope>
    <scope>SUBUNIT</scope>
    <scope>SUBCELLULAR LOCATION</scope>
</reference>
<gene>
    <name evidence="7" type="primary">ifng</name>
</gene>
<name>IFNG_PAROL</name>
<keyword id="KW-0002">3D-structure</keyword>
<keyword id="KW-0202">Cytokine</keyword>
<keyword id="KW-0325">Glycoprotein</keyword>
<keyword id="KW-0964">Secreted</keyword>
<keyword id="KW-0732">Signal</keyword>
<dbReference type="EMBL" id="AB435093">
    <property type="protein sequence ID" value="BAG50576.1"/>
    <property type="molecule type" value="mRNA"/>
</dbReference>
<dbReference type="EMBL" id="AB435094">
    <property type="protein sequence ID" value="BAG50577.1"/>
    <property type="molecule type" value="mRNA"/>
</dbReference>
<dbReference type="RefSeq" id="XP_019964836.1">
    <property type="nucleotide sequence ID" value="XM_020109277.1"/>
</dbReference>
<dbReference type="PDB" id="6F1E">
    <property type="method" value="X-ray"/>
    <property type="resolution" value="2.30 A"/>
    <property type="chains" value="A/B=24-198"/>
</dbReference>
<dbReference type="PDBsum" id="6F1E"/>
<dbReference type="SMR" id="B3IXK1"/>
<dbReference type="GlyCosmos" id="B3IXK1">
    <property type="glycosylation" value="3 sites, No reported glycans"/>
</dbReference>
<dbReference type="GeneID" id="109644000"/>
<dbReference type="KEGG" id="pov:109644000"/>
<dbReference type="CTD" id="405790"/>
<dbReference type="OrthoDB" id="574445at7898"/>
<dbReference type="GO" id="GO:0005615">
    <property type="term" value="C:extracellular space"/>
    <property type="evidence" value="ECO:0007669"/>
    <property type="project" value="UniProtKB-KW"/>
</dbReference>
<dbReference type="GO" id="GO:0005125">
    <property type="term" value="F:cytokine activity"/>
    <property type="evidence" value="ECO:0007669"/>
    <property type="project" value="UniProtKB-KW"/>
</dbReference>
<dbReference type="GO" id="GO:0042803">
    <property type="term" value="F:protein homodimerization activity"/>
    <property type="evidence" value="ECO:0000314"/>
    <property type="project" value="UniProtKB"/>
</dbReference>
<dbReference type="GO" id="GO:0005133">
    <property type="term" value="F:type II interferon receptor binding"/>
    <property type="evidence" value="ECO:0000314"/>
    <property type="project" value="UniProtKB"/>
</dbReference>
<dbReference type="GO" id="GO:0006955">
    <property type="term" value="P:immune response"/>
    <property type="evidence" value="ECO:0007669"/>
    <property type="project" value="InterPro"/>
</dbReference>
<dbReference type="FunFam" id="1.20.1250.10:FF:000049">
    <property type="entry name" value="Interferon gamma"/>
    <property type="match status" value="1"/>
</dbReference>
<dbReference type="Gene3D" id="1.20.1250.10">
    <property type="match status" value="1"/>
</dbReference>
<dbReference type="InterPro" id="IPR009079">
    <property type="entry name" value="4_helix_cytokine-like_core"/>
</dbReference>
<dbReference type="InterPro" id="IPR002069">
    <property type="entry name" value="Interferon_gamma"/>
</dbReference>
<dbReference type="PANTHER" id="PTHR11419">
    <property type="entry name" value="INTERFERON GAMMA"/>
    <property type="match status" value="1"/>
</dbReference>
<dbReference type="PANTHER" id="PTHR11419:SF0">
    <property type="entry name" value="INTERFERON GAMMA"/>
    <property type="match status" value="1"/>
</dbReference>
<dbReference type="SUPFAM" id="SSF47266">
    <property type="entry name" value="4-helical cytokines"/>
    <property type="match status" value="1"/>
</dbReference>
<accession>B3IXK1</accession>
<accession>B3IXK0</accession>
<proteinExistence type="evidence at protein level"/>